<feature type="chain" id="PRO_1000120053" description="ATP-dependent 6-phosphofructokinase">
    <location>
        <begin position="1"/>
        <end position="320"/>
    </location>
</feature>
<feature type="active site" description="Proton acceptor" evidence="1">
    <location>
        <position position="128"/>
    </location>
</feature>
<feature type="binding site" evidence="1">
    <location>
        <position position="12"/>
    </location>
    <ligand>
        <name>ATP</name>
        <dbReference type="ChEBI" id="CHEBI:30616"/>
    </ligand>
</feature>
<feature type="binding site" evidence="1">
    <location>
        <begin position="22"/>
        <end position="26"/>
    </location>
    <ligand>
        <name>ADP</name>
        <dbReference type="ChEBI" id="CHEBI:456216"/>
        <note>allosteric activator; ligand shared between dimeric partners</note>
    </ligand>
</feature>
<feature type="binding site" evidence="1">
    <location>
        <begin position="55"/>
        <end position="60"/>
    </location>
    <ligand>
        <name>ADP</name>
        <dbReference type="ChEBI" id="CHEBI:456216"/>
        <note>allosteric activator; ligand shared between dimeric partners</note>
    </ligand>
</feature>
<feature type="binding site" evidence="1">
    <location>
        <begin position="73"/>
        <end position="74"/>
    </location>
    <ligand>
        <name>ATP</name>
        <dbReference type="ChEBI" id="CHEBI:30616"/>
    </ligand>
</feature>
<feature type="binding site" evidence="1">
    <location>
        <begin position="103"/>
        <end position="106"/>
    </location>
    <ligand>
        <name>ATP</name>
        <dbReference type="ChEBI" id="CHEBI:30616"/>
    </ligand>
</feature>
<feature type="binding site" evidence="1">
    <location>
        <position position="104"/>
    </location>
    <ligand>
        <name>Mg(2+)</name>
        <dbReference type="ChEBI" id="CHEBI:18420"/>
        <note>catalytic</note>
    </ligand>
</feature>
<feature type="binding site" description="in other chain" evidence="1">
    <location>
        <begin position="126"/>
        <end position="128"/>
    </location>
    <ligand>
        <name>substrate</name>
        <note>ligand shared between dimeric partners</note>
    </ligand>
</feature>
<feature type="binding site" description="in other chain" evidence="1">
    <location>
        <position position="155"/>
    </location>
    <ligand>
        <name>ADP</name>
        <dbReference type="ChEBI" id="CHEBI:456216"/>
        <note>allosteric activator; ligand shared between dimeric partners</note>
    </ligand>
</feature>
<feature type="binding site" evidence="1">
    <location>
        <position position="163"/>
    </location>
    <ligand>
        <name>substrate</name>
        <note>ligand shared between dimeric partners</note>
    </ligand>
</feature>
<feature type="binding site" description="in other chain" evidence="1">
    <location>
        <begin position="170"/>
        <end position="172"/>
    </location>
    <ligand>
        <name>substrate</name>
        <note>ligand shared between dimeric partners</note>
    </ligand>
</feature>
<feature type="binding site" description="in other chain" evidence="1">
    <location>
        <begin position="186"/>
        <end position="188"/>
    </location>
    <ligand>
        <name>ADP</name>
        <dbReference type="ChEBI" id="CHEBI:456216"/>
        <note>allosteric activator; ligand shared between dimeric partners</note>
    </ligand>
</feature>
<feature type="binding site" description="in other chain" evidence="1">
    <location>
        <position position="212"/>
    </location>
    <ligand>
        <name>ADP</name>
        <dbReference type="ChEBI" id="CHEBI:456216"/>
        <note>allosteric activator; ligand shared between dimeric partners</note>
    </ligand>
</feature>
<feature type="binding site" description="in other chain" evidence="1">
    <location>
        <begin position="214"/>
        <end position="216"/>
    </location>
    <ligand>
        <name>ADP</name>
        <dbReference type="ChEBI" id="CHEBI:456216"/>
        <note>allosteric activator; ligand shared between dimeric partners</note>
    </ligand>
</feature>
<feature type="binding site" description="in other chain" evidence="1">
    <location>
        <position position="223"/>
    </location>
    <ligand>
        <name>substrate</name>
        <note>ligand shared between dimeric partners</note>
    </ligand>
</feature>
<feature type="binding site" evidence="1">
    <location>
        <position position="244"/>
    </location>
    <ligand>
        <name>substrate</name>
        <note>ligand shared between dimeric partners</note>
    </ligand>
</feature>
<feature type="binding site" description="in other chain" evidence="1">
    <location>
        <begin position="250"/>
        <end position="253"/>
    </location>
    <ligand>
        <name>substrate</name>
        <note>ligand shared between dimeric partners</note>
    </ligand>
</feature>
<evidence type="ECO:0000255" key="1">
    <source>
        <dbReference type="HAMAP-Rule" id="MF_00339"/>
    </source>
</evidence>
<accession>B5RFA9</accession>
<sequence length="320" mass="34897">MIKKIGVLTSGGDAPGMNAAIRGVVRAALTEGLEVMGIYDGYLGLYEDRMVQLDRYSVSDMINRGGTFLGSARFPEFRDENIRAVAIENLKKRGIDALVVIGGDGSYMGAKRLTEIGFPCIGLPGTIDNDIKGTDYTIGYFTALGTVVEAIDRLRDTSSSHQRISIVEVMGRYCGDLTLAAAIAGGCEFIVVPEVEFNREDLVAEIKAGIAKGKKHAIVAITEHMCDVDELAHFIEKETGRETRATVLGHIQRGGSPVPYDRILASRMGAYAIDLLLEGHGGRCVGIQNEQLVHHDIIDAIENMKRPFKSDWMECAKKLY</sequence>
<organism>
    <name type="scientific">Salmonella gallinarum (strain 287/91 / NCTC 13346)</name>
    <dbReference type="NCBI Taxonomy" id="550538"/>
    <lineage>
        <taxon>Bacteria</taxon>
        <taxon>Pseudomonadati</taxon>
        <taxon>Pseudomonadota</taxon>
        <taxon>Gammaproteobacteria</taxon>
        <taxon>Enterobacterales</taxon>
        <taxon>Enterobacteriaceae</taxon>
        <taxon>Salmonella</taxon>
    </lineage>
</organism>
<keyword id="KW-0021">Allosteric enzyme</keyword>
<keyword id="KW-0067">ATP-binding</keyword>
<keyword id="KW-0963">Cytoplasm</keyword>
<keyword id="KW-0324">Glycolysis</keyword>
<keyword id="KW-0418">Kinase</keyword>
<keyword id="KW-0460">Magnesium</keyword>
<keyword id="KW-0479">Metal-binding</keyword>
<keyword id="KW-0547">Nucleotide-binding</keyword>
<keyword id="KW-0808">Transferase</keyword>
<gene>
    <name evidence="1" type="primary">pfkA</name>
    <name type="ordered locus">SG3359</name>
</gene>
<protein>
    <recommendedName>
        <fullName evidence="1">ATP-dependent 6-phosphofructokinase</fullName>
        <shortName evidence="1">ATP-PFK</shortName>
        <shortName evidence="1">Phosphofructokinase</shortName>
        <ecNumber evidence="1">2.7.1.11</ecNumber>
    </recommendedName>
    <alternativeName>
        <fullName evidence="1">Phosphohexokinase</fullName>
    </alternativeName>
</protein>
<proteinExistence type="inferred from homology"/>
<name>PFKA_SALG2</name>
<reference key="1">
    <citation type="journal article" date="2008" name="Genome Res.">
        <title>Comparative genome analysis of Salmonella enteritidis PT4 and Salmonella gallinarum 287/91 provides insights into evolutionary and host adaptation pathways.</title>
        <authorList>
            <person name="Thomson N.R."/>
            <person name="Clayton D.J."/>
            <person name="Windhorst D."/>
            <person name="Vernikos G."/>
            <person name="Davidson S."/>
            <person name="Churcher C."/>
            <person name="Quail M.A."/>
            <person name="Stevens M."/>
            <person name="Jones M.A."/>
            <person name="Watson M."/>
            <person name="Barron A."/>
            <person name="Layton A."/>
            <person name="Pickard D."/>
            <person name="Kingsley R.A."/>
            <person name="Bignell A."/>
            <person name="Clark L."/>
            <person name="Harris B."/>
            <person name="Ormond D."/>
            <person name="Abdellah Z."/>
            <person name="Brooks K."/>
            <person name="Cherevach I."/>
            <person name="Chillingworth T."/>
            <person name="Woodward J."/>
            <person name="Norberczak H."/>
            <person name="Lord A."/>
            <person name="Arrowsmith C."/>
            <person name="Jagels K."/>
            <person name="Moule S."/>
            <person name="Mungall K."/>
            <person name="Saunders M."/>
            <person name="Whitehead S."/>
            <person name="Chabalgoity J.A."/>
            <person name="Maskell D."/>
            <person name="Humphreys T."/>
            <person name="Roberts M."/>
            <person name="Barrow P.A."/>
            <person name="Dougan G."/>
            <person name="Parkhill J."/>
        </authorList>
    </citation>
    <scope>NUCLEOTIDE SEQUENCE [LARGE SCALE GENOMIC DNA]</scope>
    <source>
        <strain>287/91 / NCTC 13346</strain>
    </source>
</reference>
<dbReference type="EC" id="2.7.1.11" evidence="1"/>
<dbReference type="EMBL" id="AM933173">
    <property type="protein sequence ID" value="CAR39152.1"/>
    <property type="molecule type" value="Genomic_DNA"/>
</dbReference>
<dbReference type="RefSeq" id="WP_000591792.1">
    <property type="nucleotide sequence ID" value="NC_011274.1"/>
</dbReference>
<dbReference type="SMR" id="B5RFA9"/>
<dbReference type="KEGG" id="seg:SG3359"/>
<dbReference type="HOGENOM" id="CLU_020655_0_1_6"/>
<dbReference type="UniPathway" id="UPA00109">
    <property type="reaction ID" value="UER00182"/>
</dbReference>
<dbReference type="Proteomes" id="UP000008321">
    <property type="component" value="Chromosome"/>
</dbReference>
<dbReference type="GO" id="GO:0005945">
    <property type="term" value="C:6-phosphofructokinase complex"/>
    <property type="evidence" value="ECO:0007669"/>
    <property type="project" value="TreeGrafter"/>
</dbReference>
<dbReference type="GO" id="GO:0003872">
    <property type="term" value="F:6-phosphofructokinase activity"/>
    <property type="evidence" value="ECO:0007669"/>
    <property type="project" value="UniProtKB-UniRule"/>
</dbReference>
<dbReference type="GO" id="GO:0016208">
    <property type="term" value="F:AMP binding"/>
    <property type="evidence" value="ECO:0007669"/>
    <property type="project" value="TreeGrafter"/>
</dbReference>
<dbReference type="GO" id="GO:0005524">
    <property type="term" value="F:ATP binding"/>
    <property type="evidence" value="ECO:0007669"/>
    <property type="project" value="UniProtKB-KW"/>
</dbReference>
<dbReference type="GO" id="GO:0070095">
    <property type="term" value="F:fructose-6-phosphate binding"/>
    <property type="evidence" value="ECO:0007669"/>
    <property type="project" value="TreeGrafter"/>
</dbReference>
<dbReference type="GO" id="GO:0042802">
    <property type="term" value="F:identical protein binding"/>
    <property type="evidence" value="ECO:0007669"/>
    <property type="project" value="TreeGrafter"/>
</dbReference>
<dbReference type="GO" id="GO:0046872">
    <property type="term" value="F:metal ion binding"/>
    <property type="evidence" value="ECO:0007669"/>
    <property type="project" value="UniProtKB-KW"/>
</dbReference>
<dbReference type="GO" id="GO:0048029">
    <property type="term" value="F:monosaccharide binding"/>
    <property type="evidence" value="ECO:0007669"/>
    <property type="project" value="TreeGrafter"/>
</dbReference>
<dbReference type="GO" id="GO:0061621">
    <property type="term" value="P:canonical glycolysis"/>
    <property type="evidence" value="ECO:0007669"/>
    <property type="project" value="TreeGrafter"/>
</dbReference>
<dbReference type="GO" id="GO:0030388">
    <property type="term" value="P:fructose 1,6-bisphosphate metabolic process"/>
    <property type="evidence" value="ECO:0007669"/>
    <property type="project" value="TreeGrafter"/>
</dbReference>
<dbReference type="GO" id="GO:0006002">
    <property type="term" value="P:fructose 6-phosphate metabolic process"/>
    <property type="evidence" value="ECO:0007669"/>
    <property type="project" value="InterPro"/>
</dbReference>
<dbReference type="CDD" id="cd00763">
    <property type="entry name" value="Bacterial_PFK"/>
    <property type="match status" value="1"/>
</dbReference>
<dbReference type="FunFam" id="3.40.50.450:FF:000001">
    <property type="entry name" value="ATP-dependent 6-phosphofructokinase"/>
    <property type="match status" value="1"/>
</dbReference>
<dbReference type="FunFam" id="3.40.50.460:FF:000002">
    <property type="entry name" value="ATP-dependent 6-phosphofructokinase"/>
    <property type="match status" value="1"/>
</dbReference>
<dbReference type="Gene3D" id="3.40.50.450">
    <property type="match status" value="1"/>
</dbReference>
<dbReference type="Gene3D" id="3.40.50.460">
    <property type="entry name" value="Phosphofructokinase domain"/>
    <property type="match status" value="1"/>
</dbReference>
<dbReference type="HAMAP" id="MF_00339">
    <property type="entry name" value="Phosphofructokinase_I_B1"/>
    <property type="match status" value="1"/>
</dbReference>
<dbReference type="InterPro" id="IPR022953">
    <property type="entry name" value="ATP_PFK"/>
</dbReference>
<dbReference type="InterPro" id="IPR012003">
    <property type="entry name" value="ATP_PFK_prok-type"/>
</dbReference>
<dbReference type="InterPro" id="IPR012828">
    <property type="entry name" value="PFKA_ATP_prok"/>
</dbReference>
<dbReference type="InterPro" id="IPR015912">
    <property type="entry name" value="Phosphofructokinase_CS"/>
</dbReference>
<dbReference type="InterPro" id="IPR000023">
    <property type="entry name" value="Phosphofructokinase_dom"/>
</dbReference>
<dbReference type="InterPro" id="IPR035966">
    <property type="entry name" value="PKF_sf"/>
</dbReference>
<dbReference type="NCBIfam" id="TIGR02482">
    <property type="entry name" value="PFKA_ATP"/>
    <property type="match status" value="1"/>
</dbReference>
<dbReference type="NCBIfam" id="NF002872">
    <property type="entry name" value="PRK03202.1"/>
    <property type="match status" value="1"/>
</dbReference>
<dbReference type="PANTHER" id="PTHR13697:SF4">
    <property type="entry name" value="ATP-DEPENDENT 6-PHOSPHOFRUCTOKINASE"/>
    <property type="match status" value="1"/>
</dbReference>
<dbReference type="PANTHER" id="PTHR13697">
    <property type="entry name" value="PHOSPHOFRUCTOKINASE"/>
    <property type="match status" value="1"/>
</dbReference>
<dbReference type="Pfam" id="PF00365">
    <property type="entry name" value="PFK"/>
    <property type="match status" value="1"/>
</dbReference>
<dbReference type="PIRSF" id="PIRSF000532">
    <property type="entry name" value="ATP_PFK_prok"/>
    <property type="match status" value="1"/>
</dbReference>
<dbReference type="PRINTS" id="PR00476">
    <property type="entry name" value="PHFRCTKINASE"/>
</dbReference>
<dbReference type="SUPFAM" id="SSF53784">
    <property type="entry name" value="Phosphofructokinase"/>
    <property type="match status" value="1"/>
</dbReference>
<dbReference type="PROSITE" id="PS00433">
    <property type="entry name" value="PHOSPHOFRUCTOKINASE"/>
    <property type="match status" value="1"/>
</dbReference>
<comment type="function">
    <text evidence="1">Catalyzes the phosphorylation of D-fructose 6-phosphate to fructose 1,6-bisphosphate by ATP, the first committing step of glycolysis.</text>
</comment>
<comment type="catalytic activity">
    <reaction evidence="1">
        <text>beta-D-fructose 6-phosphate + ATP = beta-D-fructose 1,6-bisphosphate + ADP + H(+)</text>
        <dbReference type="Rhea" id="RHEA:16109"/>
        <dbReference type="ChEBI" id="CHEBI:15378"/>
        <dbReference type="ChEBI" id="CHEBI:30616"/>
        <dbReference type="ChEBI" id="CHEBI:32966"/>
        <dbReference type="ChEBI" id="CHEBI:57634"/>
        <dbReference type="ChEBI" id="CHEBI:456216"/>
        <dbReference type="EC" id="2.7.1.11"/>
    </reaction>
</comment>
<comment type="cofactor">
    <cofactor evidence="1">
        <name>Mg(2+)</name>
        <dbReference type="ChEBI" id="CHEBI:18420"/>
    </cofactor>
</comment>
<comment type="activity regulation">
    <text evidence="1">Allosterically activated by ADP and other diphosphonucleosides, and allosterically inhibited by phosphoenolpyruvate.</text>
</comment>
<comment type="pathway">
    <text evidence="1">Carbohydrate degradation; glycolysis; D-glyceraldehyde 3-phosphate and glycerone phosphate from D-glucose: step 3/4.</text>
</comment>
<comment type="subunit">
    <text evidence="1">Homotetramer.</text>
</comment>
<comment type="subcellular location">
    <subcellularLocation>
        <location evidence="1">Cytoplasm</location>
    </subcellularLocation>
</comment>
<comment type="similarity">
    <text evidence="1">Belongs to the phosphofructokinase type A (PFKA) family. ATP-dependent PFK group I subfamily. Prokaryotic clade 'B1' sub-subfamily.</text>
</comment>